<proteinExistence type="inferred from homology"/>
<reference key="1">
    <citation type="journal article" date="2010" name="Genome Biol.">
        <title>Structure and dynamics of the pan-genome of Streptococcus pneumoniae and closely related species.</title>
        <authorList>
            <person name="Donati C."/>
            <person name="Hiller N.L."/>
            <person name="Tettelin H."/>
            <person name="Muzzi A."/>
            <person name="Croucher N.J."/>
            <person name="Angiuoli S.V."/>
            <person name="Oggioni M."/>
            <person name="Dunning Hotopp J.C."/>
            <person name="Hu F.Z."/>
            <person name="Riley D.R."/>
            <person name="Covacci A."/>
            <person name="Mitchell T.J."/>
            <person name="Bentley S.D."/>
            <person name="Kilian M."/>
            <person name="Ehrlich G.D."/>
            <person name="Rappuoli R."/>
            <person name="Moxon E.R."/>
            <person name="Masignani V."/>
        </authorList>
    </citation>
    <scope>NUCLEOTIDE SEQUENCE [LARGE SCALE GENOMIC DNA]</scope>
    <source>
        <strain>P1031</strain>
    </source>
</reference>
<comment type="function">
    <text evidence="1">Could be a nuclease involved in processing of the 5'-end of pre-16S rRNA.</text>
</comment>
<comment type="subcellular location">
    <subcellularLocation>
        <location evidence="1">Cytoplasm</location>
    </subcellularLocation>
</comment>
<comment type="similarity">
    <text evidence="1">Belongs to the YqgF nuclease family.</text>
</comment>
<keyword id="KW-0963">Cytoplasm</keyword>
<keyword id="KW-0378">Hydrolase</keyword>
<keyword id="KW-0540">Nuclease</keyword>
<keyword id="KW-0690">Ribosome biogenesis</keyword>
<dbReference type="EC" id="3.1.-.-" evidence="1"/>
<dbReference type="EMBL" id="CP000920">
    <property type="protein sequence ID" value="ACO21158.1"/>
    <property type="molecule type" value="Genomic_DNA"/>
</dbReference>
<dbReference type="SMR" id="C1CI84"/>
<dbReference type="KEGG" id="spp:SPP_0247"/>
<dbReference type="HOGENOM" id="CLU_098240_2_0_9"/>
<dbReference type="GO" id="GO:0005829">
    <property type="term" value="C:cytosol"/>
    <property type="evidence" value="ECO:0007669"/>
    <property type="project" value="TreeGrafter"/>
</dbReference>
<dbReference type="GO" id="GO:0004518">
    <property type="term" value="F:nuclease activity"/>
    <property type="evidence" value="ECO:0007669"/>
    <property type="project" value="UniProtKB-KW"/>
</dbReference>
<dbReference type="GO" id="GO:0000967">
    <property type="term" value="P:rRNA 5'-end processing"/>
    <property type="evidence" value="ECO:0007669"/>
    <property type="project" value="UniProtKB-UniRule"/>
</dbReference>
<dbReference type="CDD" id="cd16964">
    <property type="entry name" value="YqgF"/>
    <property type="match status" value="1"/>
</dbReference>
<dbReference type="FunFam" id="3.30.420.140:FF:000003">
    <property type="entry name" value="Putative pre-16S rRNA nuclease"/>
    <property type="match status" value="1"/>
</dbReference>
<dbReference type="Gene3D" id="3.30.420.140">
    <property type="entry name" value="YqgF/RNase H-like domain"/>
    <property type="match status" value="1"/>
</dbReference>
<dbReference type="HAMAP" id="MF_00651">
    <property type="entry name" value="Nuclease_YqgF"/>
    <property type="match status" value="1"/>
</dbReference>
<dbReference type="InterPro" id="IPR012337">
    <property type="entry name" value="RNaseH-like_sf"/>
</dbReference>
<dbReference type="InterPro" id="IPR005227">
    <property type="entry name" value="YqgF"/>
</dbReference>
<dbReference type="InterPro" id="IPR006641">
    <property type="entry name" value="YqgF/RNaseH-like_dom"/>
</dbReference>
<dbReference type="InterPro" id="IPR037027">
    <property type="entry name" value="YqgF/RNaseH-like_dom_sf"/>
</dbReference>
<dbReference type="NCBIfam" id="TIGR00250">
    <property type="entry name" value="RNAse_H_YqgF"/>
    <property type="match status" value="1"/>
</dbReference>
<dbReference type="PANTHER" id="PTHR33317">
    <property type="entry name" value="POLYNUCLEOTIDYL TRANSFERASE, RIBONUCLEASE H-LIKE SUPERFAMILY PROTEIN"/>
    <property type="match status" value="1"/>
</dbReference>
<dbReference type="PANTHER" id="PTHR33317:SF4">
    <property type="entry name" value="POLYNUCLEOTIDYL TRANSFERASE, RIBONUCLEASE H-LIKE SUPERFAMILY PROTEIN"/>
    <property type="match status" value="1"/>
</dbReference>
<dbReference type="Pfam" id="PF03652">
    <property type="entry name" value="RuvX"/>
    <property type="match status" value="1"/>
</dbReference>
<dbReference type="SMART" id="SM00732">
    <property type="entry name" value="YqgFc"/>
    <property type="match status" value="1"/>
</dbReference>
<dbReference type="SUPFAM" id="SSF53098">
    <property type="entry name" value="Ribonuclease H-like"/>
    <property type="match status" value="1"/>
</dbReference>
<accession>C1CI84</accession>
<gene>
    <name type="ordered locus">SPP_0247</name>
</gene>
<name>YQGF_STRZP</name>
<protein>
    <recommendedName>
        <fullName evidence="1">Putative pre-16S rRNA nuclease</fullName>
        <ecNumber evidence="1">3.1.-.-</ecNumber>
    </recommendedName>
</protein>
<sequence>MRIMGLDVGSKTVGVAISDPLGFTAQGLEIIQINEEQGQFGFDRVKELVDTYKVERFVVGLPKNMNNTSGPRVEASQAYGAKLEEFFGLPVDYQDERLTTVAAERMLIEQADISRNKRKKVIDKLAAQLILQNYLDRKF</sequence>
<evidence type="ECO:0000255" key="1">
    <source>
        <dbReference type="HAMAP-Rule" id="MF_00651"/>
    </source>
</evidence>
<feature type="chain" id="PRO_1000147496" description="Putative pre-16S rRNA nuclease">
    <location>
        <begin position="1"/>
        <end position="139"/>
    </location>
</feature>
<organism>
    <name type="scientific">Streptococcus pneumoniae (strain P1031)</name>
    <dbReference type="NCBI Taxonomy" id="488223"/>
    <lineage>
        <taxon>Bacteria</taxon>
        <taxon>Bacillati</taxon>
        <taxon>Bacillota</taxon>
        <taxon>Bacilli</taxon>
        <taxon>Lactobacillales</taxon>
        <taxon>Streptococcaceae</taxon>
        <taxon>Streptococcus</taxon>
    </lineage>
</organism>